<organism>
    <name type="scientific">Chloroflexus aurantiacus (strain ATCC 29366 / DSM 635 / J-10-fl)</name>
    <dbReference type="NCBI Taxonomy" id="324602"/>
    <lineage>
        <taxon>Bacteria</taxon>
        <taxon>Bacillati</taxon>
        <taxon>Chloroflexota</taxon>
        <taxon>Chloroflexia</taxon>
        <taxon>Chloroflexales</taxon>
        <taxon>Chloroflexineae</taxon>
        <taxon>Chloroflexaceae</taxon>
        <taxon>Chloroflexus</taxon>
    </lineage>
</organism>
<dbReference type="EC" id="2.7.11.32" evidence="1"/>
<dbReference type="EC" id="2.7.4.27" evidence="1"/>
<dbReference type="EMBL" id="CP000909">
    <property type="protein sequence ID" value="ABY36164.1"/>
    <property type="molecule type" value="Genomic_DNA"/>
</dbReference>
<dbReference type="RefSeq" id="WP_012258817.1">
    <property type="nucleotide sequence ID" value="NC_010175.1"/>
</dbReference>
<dbReference type="RefSeq" id="YP_001636553.1">
    <property type="nucleotide sequence ID" value="NC_010175.1"/>
</dbReference>
<dbReference type="SMR" id="A9WG10"/>
<dbReference type="FunCoup" id="A9WG10">
    <property type="interactions" value="164"/>
</dbReference>
<dbReference type="STRING" id="324602.Caur_2965"/>
<dbReference type="EnsemblBacteria" id="ABY36164">
    <property type="protein sequence ID" value="ABY36164"/>
    <property type="gene ID" value="Caur_2965"/>
</dbReference>
<dbReference type="KEGG" id="cau:Caur_2965"/>
<dbReference type="PATRIC" id="fig|324602.8.peg.3363"/>
<dbReference type="eggNOG" id="COG1806">
    <property type="taxonomic scope" value="Bacteria"/>
</dbReference>
<dbReference type="HOGENOM" id="CLU_046206_2_1_0"/>
<dbReference type="InParanoid" id="A9WG10"/>
<dbReference type="Proteomes" id="UP000002008">
    <property type="component" value="Chromosome"/>
</dbReference>
<dbReference type="GO" id="GO:0043531">
    <property type="term" value="F:ADP binding"/>
    <property type="evidence" value="ECO:0007669"/>
    <property type="project" value="UniProtKB-UniRule"/>
</dbReference>
<dbReference type="GO" id="GO:0005524">
    <property type="term" value="F:ATP binding"/>
    <property type="evidence" value="ECO:0007669"/>
    <property type="project" value="InterPro"/>
</dbReference>
<dbReference type="GO" id="GO:0016776">
    <property type="term" value="F:phosphotransferase activity, phosphate group as acceptor"/>
    <property type="evidence" value="ECO:0007669"/>
    <property type="project" value="UniProtKB-UniRule"/>
</dbReference>
<dbReference type="GO" id="GO:0004674">
    <property type="term" value="F:protein serine/threonine kinase activity"/>
    <property type="evidence" value="ECO:0007669"/>
    <property type="project" value="UniProtKB-UniRule"/>
</dbReference>
<dbReference type="HAMAP" id="MF_00921">
    <property type="entry name" value="PDRP"/>
    <property type="match status" value="1"/>
</dbReference>
<dbReference type="InterPro" id="IPR005177">
    <property type="entry name" value="Kinase-pyrophosphorylase"/>
</dbReference>
<dbReference type="InterPro" id="IPR026565">
    <property type="entry name" value="PPDK_reg"/>
</dbReference>
<dbReference type="NCBIfam" id="NF003742">
    <property type="entry name" value="PRK05339.1"/>
    <property type="match status" value="1"/>
</dbReference>
<dbReference type="PANTHER" id="PTHR31756">
    <property type="entry name" value="PYRUVATE, PHOSPHATE DIKINASE REGULATORY PROTEIN 1, CHLOROPLASTIC"/>
    <property type="match status" value="1"/>
</dbReference>
<dbReference type="PANTHER" id="PTHR31756:SF3">
    <property type="entry name" value="PYRUVATE, PHOSPHATE DIKINASE REGULATORY PROTEIN 1, CHLOROPLASTIC"/>
    <property type="match status" value="1"/>
</dbReference>
<dbReference type="Pfam" id="PF03618">
    <property type="entry name" value="Kinase-PPPase"/>
    <property type="match status" value="1"/>
</dbReference>
<evidence type="ECO:0000255" key="1">
    <source>
        <dbReference type="HAMAP-Rule" id="MF_00921"/>
    </source>
</evidence>
<protein>
    <recommendedName>
        <fullName evidence="1">Putative pyruvate, phosphate dikinase regulatory protein</fullName>
        <shortName evidence="1">PPDK regulatory protein</shortName>
        <ecNumber evidence="1">2.7.11.32</ecNumber>
        <ecNumber evidence="1">2.7.4.27</ecNumber>
    </recommendedName>
</protein>
<name>PDRP_CHLAA</name>
<gene>
    <name type="ordered locus">Caur_2965</name>
</gene>
<keyword id="KW-0418">Kinase</keyword>
<keyword id="KW-0547">Nucleotide-binding</keyword>
<keyword id="KW-1185">Reference proteome</keyword>
<keyword id="KW-0723">Serine/threonine-protein kinase</keyword>
<keyword id="KW-0808">Transferase</keyword>
<proteinExistence type="inferred from homology"/>
<reference key="1">
    <citation type="journal article" date="2011" name="BMC Genomics">
        <title>Complete genome sequence of the filamentous anoxygenic phototrophic bacterium Chloroflexus aurantiacus.</title>
        <authorList>
            <person name="Tang K.H."/>
            <person name="Barry K."/>
            <person name="Chertkov O."/>
            <person name="Dalin E."/>
            <person name="Han C.S."/>
            <person name="Hauser L.J."/>
            <person name="Honchak B.M."/>
            <person name="Karbach L.E."/>
            <person name="Land M.L."/>
            <person name="Lapidus A."/>
            <person name="Larimer F.W."/>
            <person name="Mikhailova N."/>
            <person name="Pitluck S."/>
            <person name="Pierson B.K."/>
            <person name="Blankenship R.E."/>
        </authorList>
    </citation>
    <scope>NUCLEOTIDE SEQUENCE [LARGE SCALE GENOMIC DNA]</scope>
    <source>
        <strain>ATCC 29366 / DSM 635 / J-10-fl</strain>
    </source>
</reference>
<comment type="function">
    <text evidence="1">Bifunctional serine/threonine kinase and phosphorylase involved in the regulation of the pyruvate, phosphate dikinase (PPDK) by catalyzing its phosphorylation/dephosphorylation.</text>
</comment>
<comment type="catalytic activity">
    <reaction evidence="1">
        <text>N(tele)-phospho-L-histidyl/L-threonyl-[pyruvate, phosphate dikinase] + ADP = N(tele)-phospho-L-histidyl/O-phospho-L-threonyl-[pyruvate, phosphate dikinase] + AMP + H(+)</text>
        <dbReference type="Rhea" id="RHEA:43692"/>
        <dbReference type="Rhea" id="RHEA-COMP:10650"/>
        <dbReference type="Rhea" id="RHEA-COMP:10651"/>
        <dbReference type="ChEBI" id="CHEBI:15378"/>
        <dbReference type="ChEBI" id="CHEBI:30013"/>
        <dbReference type="ChEBI" id="CHEBI:61977"/>
        <dbReference type="ChEBI" id="CHEBI:83586"/>
        <dbReference type="ChEBI" id="CHEBI:456215"/>
        <dbReference type="ChEBI" id="CHEBI:456216"/>
        <dbReference type="EC" id="2.7.11.32"/>
    </reaction>
</comment>
<comment type="catalytic activity">
    <reaction evidence="1">
        <text>N(tele)-phospho-L-histidyl/O-phospho-L-threonyl-[pyruvate, phosphate dikinase] + phosphate + H(+) = N(tele)-phospho-L-histidyl/L-threonyl-[pyruvate, phosphate dikinase] + diphosphate</text>
        <dbReference type="Rhea" id="RHEA:43696"/>
        <dbReference type="Rhea" id="RHEA-COMP:10650"/>
        <dbReference type="Rhea" id="RHEA-COMP:10651"/>
        <dbReference type="ChEBI" id="CHEBI:15378"/>
        <dbReference type="ChEBI" id="CHEBI:30013"/>
        <dbReference type="ChEBI" id="CHEBI:33019"/>
        <dbReference type="ChEBI" id="CHEBI:43474"/>
        <dbReference type="ChEBI" id="CHEBI:61977"/>
        <dbReference type="ChEBI" id="CHEBI:83586"/>
        <dbReference type="EC" id="2.7.4.27"/>
    </reaction>
</comment>
<comment type="similarity">
    <text evidence="1">Belongs to the pyruvate, phosphate/water dikinase regulatory protein family. PDRP subfamily.</text>
</comment>
<sequence length="279" mass="31182">MSDQPVSQTAPPLYIVSGGAGAVGEQVARLTLSQFEGAEVPLIIIPNVRDLSQIAEVVERAAHQNGTILHTLMEPSLRRELMRLARERGVAEIDLVGSVLSRLATVLRKEPLGKPGLYQPRRSAYFERLDAIEYTVAHDDGNKPHELHQADIVLVGISRVGKTPLSMYLAVLGWKVANVPLVREVPLPAELFQVDPRRVIGLIVEAEQITARRRWRQRRMGVSIGGNYTSLDAAYDEVEWARRTFRQHGWTTINVTDKSIEESADEIITLISRRFSQLP</sequence>
<feature type="chain" id="PRO_1000149702" description="Putative pyruvate, phosphate dikinase regulatory protein">
    <location>
        <begin position="1"/>
        <end position="279"/>
    </location>
</feature>
<feature type="binding site" evidence="1">
    <location>
        <begin position="156"/>
        <end position="163"/>
    </location>
    <ligand>
        <name>ADP</name>
        <dbReference type="ChEBI" id="CHEBI:456216"/>
    </ligand>
</feature>
<accession>A9WG10</accession>